<sequence>MRNITTSAYTPTEFTIENISDTVAKISAWPFEIGYGITLAHPLRRLLYTSTIGYAPTAIHIDGVAHEFDSMRGMLEDVALFIINLKKLRFKIKGESNKEIVEFSFKGSKEIYGKDLNNDQVEVVNKDAYLATINEDAELKFTLIVEKGIGYVPSEEIKELINDPKFIALDAFFTPVREATYDIEKVLFEDNPDYEKVVLTVTTDGQITPNEAFQNALEAMYKQLSVFDKITNVRSVIKNQATSNELENTKLLQNITDLNLSARSYNCLEKAGVVYIGELALMSVSELAGLKNLGKKSLDEIKNIMESIGFPVGTSKLSDNKEILKNKIAELKAQNEG</sequence>
<keyword id="KW-0240">DNA-directed RNA polymerase</keyword>
<keyword id="KW-0548">Nucleotidyltransferase</keyword>
<keyword id="KW-0804">Transcription</keyword>
<keyword id="KW-0808">Transferase</keyword>
<reference key="1">
    <citation type="submission" date="2006-12" db="EMBL/GenBank/DDBJ databases">
        <authorList>
            <person name="Fouts D.E."/>
            <person name="Nelson K.E."/>
            <person name="Sebastian Y."/>
        </authorList>
    </citation>
    <scope>NUCLEOTIDE SEQUENCE [LARGE SCALE GENOMIC DNA]</scope>
    <source>
        <strain>81-176</strain>
    </source>
</reference>
<dbReference type="EC" id="2.7.7.6" evidence="1"/>
<dbReference type="EMBL" id="CP000538">
    <property type="protein sequence ID" value="EAQ72933.1"/>
    <property type="molecule type" value="Genomic_DNA"/>
</dbReference>
<dbReference type="RefSeq" id="WP_002855748.1">
    <property type="nucleotide sequence ID" value="NC_008787.1"/>
</dbReference>
<dbReference type="SMR" id="A1W1J7"/>
<dbReference type="KEGG" id="cjj:CJJ81176_1582"/>
<dbReference type="eggNOG" id="COG0202">
    <property type="taxonomic scope" value="Bacteria"/>
</dbReference>
<dbReference type="HOGENOM" id="CLU_053084_0_1_7"/>
<dbReference type="Proteomes" id="UP000000646">
    <property type="component" value="Chromosome"/>
</dbReference>
<dbReference type="GO" id="GO:0005737">
    <property type="term" value="C:cytoplasm"/>
    <property type="evidence" value="ECO:0007669"/>
    <property type="project" value="UniProtKB-ARBA"/>
</dbReference>
<dbReference type="GO" id="GO:0000428">
    <property type="term" value="C:DNA-directed RNA polymerase complex"/>
    <property type="evidence" value="ECO:0007669"/>
    <property type="project" value="UniProtKB-KW"/>
</dbReference>
<dbReference type="GO" id="GO:0003677">
    <property type="term" value="F:DNA binding"/>
    <property type="evidence" value="ECO:0007669"/>
    <property type="project" value="UniProtKB-UniRule"/>
</dbReference>
<dbReference type="GO" id="GO:0003899">
    <property type="term" value="F:DNA-directed RNA polymerase activity"/>
    <property type="evidence" value="ECO:0007669"/>
    <property type="project" value="UniProtKB-UniRule"/>
</dbReference>
<dbReference type="GO" id="GO:0046983">
    <property type="term" value="F:protein dimerization activity"/>
    <property type="evidence" value="ECO:0007669"/>
    <property type="project" value="InterPro"/>
</dbReference>
<dbReference type="GO" id="GO:0006351">
    <property type="term" value="P:DNA-templated transcription"/>
    <property type="evidence" value="ECO:0007669"/>
    <property type="project" value="UniProtKB-UniRule"/>
</dbReference>
<dbReference type="CDD" id="cd06928">
    <property type="entry name" value="RNAP_alpha_NTD"/>
    <property type="match status" value="1"/>
</dbReference>
<dbReference type="Gene3D" id="1.10.150.20">
    <property type="entry name" value="5' to 3' exonuclease, C-terminal subdomain"/>
    <property type="match status" value="1"/>
</dbReference>
<dbReference type="Gene3D" id="2.170.120.12">
    <property type="entry name" value="DNA-directed RNA polymerase, insert domain"/>
    <property type="match status" value="1"/>
</dbReference>
<dbReference type="Gene3D" id="3.30.1360.10">
    <property type="entry name" value="RNA polymerase, RBP11-like subunit"/>
    <property type="match status" value="1"/>
</dbReference>
<dbReference type="HAMAP" id="MF_00059">
    <property type="entry name" value="RNApol_bact_RpoA"/>
    <property type="match status" value="1"/>
</dbReference>
<dbReference type="InterPro" id="IPR011262">
    <property type="entry name" value="DNA-dir_RNA_pol_insert"/>
</dbReference>
<dbReference type="InterPro" id="IPR011263">
    <property type="entry name" value="DNA-dir_RNA_pol_RpoA/D/Rpb3"/>
</dbReference>
<dbReference type="InterPro" id="IPR011773">
    <property type="entry name" value="DNA-dir_RpoA"/>
</dbReference>
<dbReference type="InterPro" id="IPR036603">
    <property type="entry name" value="RBP11-like"/>
</dbReference>
<dbReference type="InterPro" id="IPR011260">
    <property type="entry name" value="RNAP_asu_C"/>
</dbReference>
<dbReference type="InterPro" id="IPR036643">
    <property type="entry name" value="RNApol_insert_sf"/>
</dbReference>
<dbReference type="NCBIfam" id="NF003517">
    <property type="entry name" value="PRK05182.2-3"/>
    <property type="match status" value="1"/>
</dbReference>
<dbReference type="NCBIfam" id="NF003519">
    <property type="entry name" value="PRK05182.2-5"/>
    <property type="match status" value="1"/>
</dbReference>
<dbReference type="NCBIfam" id="TIGR02027">
    <property type="entry name" value="rpoA"/>
    <property type="match status" value="1"/>
</dbReference>
<dbReference type="Pfam" id="PF01000">
    <property type="entry name" value="RNA_pol_A_bac"/>
    <property type="match status" value="1"/>
</dbReference>
<dbReference type="Pfam" id="PF03118">
    <property type="entry name" value="RNA_pol_A_CTD"/>
    <property type="match status" value="1"/>
</dbReference>
<dbReference type="Pfam" id="PF01193">
    <property type="entry name" value="RNA_pol_L"/>
    <property type="match status" value="1"/>
</dbReference>
<dbReference type="SMART" id="SM00662">
    <property type="entry name" value="RPOLD"/>
    <property type="match status" value="1"/>
</dbReference>
<dbReference type="SUPFAM" id="SSF47789">
    <property type="entry name" value="C-terminal domain of RNA polymerase alpha subunit"/>
    <property type="match status" value="1"/>
</dbReference>
<dbReference type="SUPFAM" id="SSF56553">
    <property type="entry name" value="Insert subdomain of RNA polymerase alpha subunit"/>
    <property type="match status" value="1"/>
</dbReference>
<dbReference type="SUPFAM" id="SSF55257">
    <property type="entry name" value="RBP11-like subunits of RNA polymerase"/>
    <property type="match status" value="1"/>
</dbReference>
<feature type="chain" id="PRO_0000296792" description="DNA-directed RNA polymerase subunit alpha">
    <location>
        <begin position="1"/>
        <end position="337"/>
    </location>
</feature>
<feature type="region of interest" description="Alpha N-terminal domain (alpha-NTD)" evidence="1">
    <location>
        <begin position="1"/>
        <end position="231"/>
    </location>
</feature>
<feature type="region of interest" description="Alpha C-terminal domain (alpha-CTD)" evidence="1">
    <location>
        <begin position="247"/>
        <end position="337"/>
    </location>
</feature>
<proteinExistence type="inferred from homology"/>
<comment type="function">
    <text evidence="1">DNA-dependent RNA polymerase catalyzes the transcription of DNA into RNA using the four ribonucleoside triphosphates as substrates.</text>
</comment>
<comment type="catalytic activity">
    <reaction evidence="1">
        <text>RNA(n) + a ribonucleoside 5'-triphosphate = RNA(n+1) + diphosphate</text>
        <dbReference type="Rhea" id="RHEA:21248"/>
        <dbReference type="Rhea" id="RHEA-COMP:14527"/>
        <dbReference type="Rhea" id="RHEA-COMP:17342"/>
        <dbReference type="ChEBI" id="CHEBI:33019"/>
        <dbReference type="ChEBI" id="CHEBI:61557"/>
        <dbReference type="ChEBI" id="CHEBI:140395"/>
        <dbReference type="EC" id="2.7.7.6"/>
    </reaction>
</comment>
<comment type="subunit">
    <text evidence="1">Homodimer. The RNAP catalytic core consists of 2 alpha, 1 beta, 1 beta' and 1 omega subunit. When a sigma factor is associated with the core the holoenzyme is formed, which can initiate transcription.</text>
</comment>
<comment type="domain">
    <text evidence="1">The N-terminal domain is essential for RNAP assembly and basal transcription, whereas the C-terminal domain is involved in interaction with transcriptional regulators and with upstream promoter elements.</text>
</comment>
<comment type="similarity">
    <text evidence="1">Belongs to the RNA polymerase alpha chain family.</text>
</comment>
<name>RPOA_CAMJJ</name>
<accession>A1W1J7</accession>
<protein>
    <recommendedName>
        <fullName evidence="1">DNA-directed RNA polymerase subunit alpha</fullName>
        <shortName evidence="1">RNAP subunit alpha</shortName>
        <ecNumber evidence="1">2.7.7.6</ecNumber>
    </recommendedName>
    <alternativeName>
        <fullName evidence="1">RNA polymerase subunit alpha</fullName>
    </alternativeName>
    <alternativeName>
        <fullName evidence="1">Transcriptase subunit alpha</fullName>
    </alternativeName>
</protein>
<gene>
    <name evidence="1" type="primary">rpoA</name>
    <name type="ordered locus">CJJ81176_1582</name>
</gene>
<organism>
    <name type="scientific">Campylobacter jejuni subsp. jejuni serotype O:23/36 (strain 81-176)</name>
    <dbReference type="NCBI Taxonomy" id="354242"/>
    <lineage>
        <taxon>Bacteria</taxon>
        <taxon>Pseudomonadati</taxon>
        <taxon>Campylobacterota</taxon>
        <taxon>Epsilonproteobacteria</taxon>
        <taxon>Campylobacterales</taxon>
        <taxon>Campylobacteraceae</taxon>
        <taxon>Campylobacter</taxon>
    </lineage>
</organism>
<evidence type="ECO:0000255" key="1">
    <source>
        <dbReference type="HAMAP-Rule" id="MF_00059"/>
    </source>
</evidence>